<name>PB1F2_I77A4</name>
<organism>
    <name type="scientific">Influenza A virus (strain A/Swine/Colorado/1/1977 H3N2)</name>
    <dbReference type="NCBI Taxonomy" id="385645"/>
    <lineage>
        <taxon>Viruses</taxon>
        <taxon>Riboviria</taxon>
        <taxon>Orthornavirae</taxon>
        <taxon>Negarnaviricota</taxon>
        <taxon>Polyploviricotina</taxon>
        <taxon>Insthoviricetes</taxon>
        <taxon>Articulavirales</taxon>
        <taxon>Orthomyxoviridae</taxon>
        <taxon>Alphainfluenzavirus</taxon>
        <taxon>Alphainfluenzavirus influenzae</taxon>
        <taxon>Influenza A virus</taxon>
    </lineage>
</organism>
<accession>Q288Y7</accession>
<comment type="function">
    <text evidence="1">Plays an important role in promoting lung pathology in both primary viral infection and secondary bacterial infection. Promotes alteration of mitochondrial morphology, dissipation of mitochondrial membrane potential, and cell death. Alternatively, inhibits the production of interferon in the infected cell at the level of host mitochondrial antiviral signaling MAVS. Its level of expression differs greatly depending on which cell type is infected, in a manner that is independent of the levels of expression of other viral proteins. Monocytic cells are more affected than epithelial cells. Seems to disable virus-infected monocytes or other host innate immune cells. During early stage of infection, predisposes the mitochondria to permeability transition through interaction with host SLC25A6/ANT3 and VDAC1. These proteins participate in the formation of the permeability transition pore complex (PTPC) responsible of the release of mitochondrial products that triggers apoptosis.</text>
</comment>
<comment type="subunit">
    <text evidence="1">Oligomer. Interacts with human SLC25A6/ANT3 and VDAC1. Interacts with host MAVS.</text>
</comment>
<comment type="subcellular location">
    <subcellularLocation>
        <location evidence="1">Host mitochondrion inner membrane</location>
    </subcellularLocation>
    <subcellularLocation>
        <location evidence="1">Host nucleus</location>
    </subcellularLocation>
    <subcellularLocation>
        <location evidence="1">Host cytoplasm</location>
        <location evidence="1">Host cytosol</location>
    </subcellularLocation>
    <text evidence="1">Inner mitochondrial membrane in most cells types. Otherwise is detected in the nucleus and cytosol.</text>
</comment>
<comment type="miscellaneous">
    <text>Is not encoded in all strains, and seems to be dispensable for replication.</text>
</comment>
<comment type="similarity">
    <text evidence="1">Belongs to the influenza viruses PB1-F2 family.</text>
</comment>
<feature type="chain" id="PRO_0000278729" description="Protein PB1-F2">
    <location>
        <begin position="1"/>
        <end position="90"/>
    </location>
</feature>
<feature type="region of interest" description="Disordered" evidence="2">
    <location>
        <begin position="1"/>
        <end position="34"/>
    </location>
</feature>
<feature type="region of interest" description="Mitochondrial targeting sequence" evidence="1">
    <location>
        <begin position="65"/>
        <end position="87"/>
    </location>
</feature>
<feature type="site" description="Low pathogenicity" evidence="1">
    <location>
        <position position="66"/>
    </location>
</feature>
<organismHost>
    <name type="scientific">Aves</name>
    <dbReference type="NCBI Taxonomy" id="8782"/>
</organismHost>
<organismHost>
    <name type="scientific">Cetacea</name>
    <name type="common">whales</name>
    <dbReference type="NCBI Taxonomy" id="9721"/>
</organismHost>
<organismHost>
    <name type="scientific">Homo sapiens</name>
    <name type="common">Human</name>
    <dbReference type="NCBI Taxonomy" id="9606"/>
</organismHost>
<organismHost>
    <name type="scientific">Phocidae</name>
    <name type="common">true seals</name>
    <dbReference type="NCBI Taxonomy" id="9709"/>
</organismHost>
<organismHost>
    <name type="scientific">Sus scrofa</name>
    <name type="common">Pig</name>
    <dbReference type="NCBI Taxonomy" id="9823"/>
</organismHost>
<dbReference type="EMBL" id="CY009306">
    <property type="protein sequence ID" value="ABD61560.1"/>
    <property type="molecule type" value="Genomic_RNA"/>
</dbReference>
<dbReference type="SMR" id="Q288Y7"/>
<dbReference type="Proteomes" id="UP000009193">
    <property type="component" value="Genome"/>
</dbReference>
<dbReference type="GO" id="GO:0044164">
    <property type="term" value="C:host cell cytosol"/>
    <property type="evidence" value="ECO:0007669"/>
    <property type="project" value="UniProtKB-SubCell"/>
</dbReference>
<dbReference type="GO" id="GO:0044192">
    <property type="term" value="C:host cell mitochondrial inner membrane"/>
    <property type="evidence" value="ECO:0007669"/>
    <property type="project" value="UniProtKB-SubCell"/>
</dbReference>
<dbReference type="GO" id="GO:0042025">
    <property type="term" value="C:host cell nucleus"/>
    <property type="evidence" value="ECO:0007669"/>
    <property type="project" value="UniProtKB-SubCell"/>
</dbReference>
<dbReference type="GO" id="GO:0016020">
    <property type="term" value="C:membrane"/>
    <property type="evidence" value="ECO:0007669"/>
    <property type="project" value="UniProtKB-UniRule"/>
</dbReference>
<dbReference type="GO" id="GO:0052150">
    <property type="term" value="P:symbiont-mediated perturbation of host apoptosis"/>
    <property type="evidence" value="ECO:0007669"/>
    <property type="project" value="UniProtKB-KW"/>
</dbReference>
<dbReference type="GO" id="GO:0039545">
    <property type="term" value="P:symbiont-mediated suppression of host cytoplasmic pattern recognition receptor signaling pathway via inhibition of MAVS activity"/>
    <property type="evidence" value="ECO:0007669"/>
    <property type="project" value="UniProtKB-KW"/>
</dbReference>
<dbReference type="HAMAP" id="MF_04064">
    <property type="entry name" value="INFV_PB1F2"/>
    <property type="match status" value="1"/>
</dbReference>
<dbReference type="InterPro" id="IPR021045">
    <property type="entry name" value="Flu_proapoptotic_PB1-F2"/>
</dbReference>
<dbReference type="Pfam" id="PF11986">
    <property type="entry name" value="PB1-F2"/>
    <property type="match status" value="1"/>
</dbReference>
<proteinExistence type="inferred from homology"/>
<protein>
    <recommendedName>
        <fullName evidence="1">Protein PB1-F2</fullName>
    </recommendedName>
</protein>
<evidence type="ECO:0000255" key="1">
    <source>
        <dbReference type="HAMAP-Rule" id="MF_04064"/>
    </source>
</evidence>
<evidence type="ECO:0000256" key="2">
    <source>
        <dbReference type="SAM" id="MobiDB-lite"/>
    </source>
</evidence>
<gene>
    <name evidence="1" type="primary">PB1</name>
</gene>
<reference key="1">
    <citation type="submission" date="2006-03" db="EMBL/GenBank/DDBJ databases">
        <title>The NIAID influenza genome sequencing project.</title>
        <authorList>
            <person name="Ghedin E."/>
            <person name="Spiro D."/>
            <person name="Miller N."/>
            <person name="Zaborsky J."/>
            <person name="Feldblyum T."/>
            <person name="Subbu V."/>
            <person name="Shumway M."/>
            <person name="Sparenborg J."/>
            <person name="Groveman L."/>
            <person name="Halpin R."/>
            <person name="Sitz J."/>
            <person name="Koo H."/>
            <person name="Salzberg S.L."/>
            <person name="Webster R.G."/>
            <person name="Hoffmann E."/>
            <person name="Krauss S."/>
            <person name="Naeve C."/>
            <person name="Bao Y."/>
            <person name="Bolotov P."/>
            <person name="Dernovoy D."/>
            <person name="Kiryutin B."/>
            <person name="Lipman D.J."/>
            <person name="Tatusova T."/>
        </authorList>
    </citation>
    <scope>NUCLEOTIDE SEQUENCE [GENOMIC RNA]</scope>
</reference>
<sequence length="90" mass="10715">MEQEQDTPWTQSTEHINIQKKGSGQQTQRLGRPNSTQLMDHYLRIMSQADMHKQTVSWKQWLSLKNPTQGFLKTRALKRWKSFNKQGWTN</sequence>
<keyword id="KW-0053">Apoptosis</keyword>
<keyword id="KW-1035">Host cytoplasm</keyword>
<keyword id="KW-1043">Host membrane</keyword>
<keyword id="KW-1045">Host mitochondrion</keyword>
<keyword id="KW-1046">Host mitochondrion inner membrane</keyword>
<keyword id="KW-1048">Host nucleus</keyword>
<keyword id="KW-0945">Host-virus interaction</keyword>
<keyword id="KW-1090">Inhibition of host innate immune response by virus</keyword>
<keyword id="KW-1097">Inhibition of host MAVS by virus</keyword>
<keyword id="KW-1113">Inhibition of host RLR pathway by virus</keyword>
<keyword id="KW-0472">Membrane</keyword>
<keyword id="KW-1119">Modulation of host cell apoptosis by virus</keyword>
<keyword id="KW-0899">Viral immunoevasion</keyword>